<feature type="chain" id="PRO_0000295220" description="CUGBP Elav-like family member 3-B">
    <location>
        <begin position="1"/>
        <end position="462"/>
    </location>
</feature>
<feature type="domain" description="RRM 1" evidence="2">
    <location>
        <begin position="7"/>
        <end position="88"/>
    </location>
</feature>
<feature type="domain" description="RRM 2" evidence="2">
    <location>
        <begin position="95"/>
        <end position="175"/>
    </location>
</feature>
<feature type="domain" description="RRM 3" evidence="2">
    <location>
        <begin position="377"/>
        <end position="455"/>
    </location>
</feature>
<dbReference type="EMBL" id="BC046942">
    <property type="protein sequence ID" value="AAH46942.1"/>
    <property type="molecule type" value="mRNA"/>
</dbReference>
<dbReference type="SMR" id="Q7ZWM3"/>
<dbReference type="DNASU" id="380387"/>
<dbReference type="GeneID" id="380387"/>
<dbReference type="KEGG" id="xla:380387"/>
<dbReference type="AGR" id="Xenbase:XB-GENE-5796640"/>
<dbReference type="CTD" id="380387"/>
<dbReference type="Xenbase" id="XB-GENE-5796640">
    <property type="gene designation" value="celf3.S"/>
</dbReference>
<dbReference type="OrthoDB" id="410044at2759"/>
<dbReference type="Proteomes" id="UP000186698">
    <property type="component" value="Chromosome 8S"/>
</dbReference>
<dbReference type="Bgee" id="380387">
    <property type="expression patterns" value="Expressed in brain and 7 other cell types or tissues"/>
</dbReference>
<dbReference type="GO" id="GO:0005737">
    <property type="term" value="C:cytoplasm"/>
    <property type="evidence" value="ECO:0000318"/>
    <property type="project" value="GO_Central"/>
</dbReference>
<dbReference type="GO" id="GO:0005634">
    <property type="term" value="C:nucleus"/>
    <property type="evidence" value="ECO:0000318"/>
    <property type="project" value="GO_Central"/>
</dbReference>
<dbReference type="GO" id="GO:1990904">
    <property type="term" value="C:ribonucleoprotein complex"/>
    <property type="evidence" value="ECO:0000318"/>
    <property type="project" value="GO_Central"/>
</dbReference>
<dbReference type="GO" id="GO:0003729">
    <property type="term" value="F:mRNA binding"/>
    <property type="evidence" value="ECO:0000318"/>
    <property type="project" value="GO_Central"/>
</dbReference>
<dbReference type="GO" id="GO:0006376">
    <property type="term" value="P:mRNA splice site recognition"/>
    <property type="evidence" value="ECO:0000318"/>
    <property type="project" value="GO_Central"/>
</dbReference>
<dbReference type="GO" id="GO:0048026">
    <property type="term" value="P:positive regulation of mRNA splicing, via spliceosome"/>
    <property type="evidence" value="ECO:0000250"/>
    <property type="project" value="UniProtKB"/>
</dbReference>
<dbReference type="GO" id="GO:0000381">
    <property type="term" value="P:regulation of alternative mRNA splicing, via spliceosome"/>
    <property type="evidence" value="ECO:0000318"/>
    <property type="project" value="GO_Central"/>
</dbReference>
<dbReference type="CDD" id="cd12632">
    <property type="entry name" value="RRM1_CELF3_4_5_6"/>
    <property type="match status" value="1"/>
</dbReference>
<dbReference type="CDD" id="cd12635">
    <property type="entry name" value="RRM2_CELF3_4_5_6"/>
    <property type="match status" value="1"/>
</dbReference>
<dbReference type="CDD" id="cd12639">
    <property type="entry name" value="RRM3_CELF3_4_5_6"/>
    <property type="match status" value="1"/>
</dbReference>
<dbReference type="FunFam" id="3.30.70.330:FF:000007">
    <property type="entry name" value="CUGBP Elav-like family member 4 isoform 3"/>
    <property type="match status" value="1"/>
</dbReference>
<dbReference type="FunFam" id="3.30.70.330:FF:000010">
    <property type="entry name" value="CUGBP Elav-like family member 4 isoform 3"/>
    <property type="match status" value="1"/>
</dbReference>
<dbReference type="FunFam" id="3.30.70.330:FF:000148">
    <property type="entry name" value="Putative CUGBP Elav-like family member 3"/>
    <property type="match status" value="1"/>
</dbReference>
<dbReference type="Gene3D" id="3.30.70.330">
    <property type="match status" value="3"/>
</dbReference>
<dbReference type="InterPro" id="IPR034648">
    <property type="entry name" value="CELF3/4/5/6_RRM1"/>
</dbReference>
<dbReference type="InterPro" id="IPR012677">
    <property type="entry name" value="Nucleotide-bd_a/b_plait_sf"/>
</dbReference>
<dbReference type="InterPro" id="IPR035979">
    <property type="entry name" value="RBD_domain_sf"/>
</dbReference>
<dbReference type="InterPro" id="IPR000504">
    <property type="entry name" value="RRM_dom"/>
</dbReference>
<dbReference type="PANTHER" id="PTHR24012">
    <property type="entry name" value="RNA BINDING PROTEIN"/>
    <property type="match status" value="1"/>
</dbReference>
<dbReference type="Pfam" id="PF00076">
    <property type="entry name" value="RRM_1"/>
    <property type="match status" value="3"/>
</dbReference>
<dbReference type="SMART" id="SM00360">
    <property type="entry name" value="RRM"/>
    <property type="match status" value="3"/>
</dbReference>
<dbReference type="SUPFAM" id="SSF54928">
    <property type="entry name" value="RNA-binding domain, RBD"/>
    <property type="match status" value="2"/>
</dbReference>
<dbReference type="PROSITE" id="PS50102">
    <property type="entry name" value="RRM"/>
    <property type="match status" value="3"/>
</dbReference>
<accession>Q7ZWM3</accession>
<keyword id="KW-0963">Cytoplasm</keyword>
<keyword id="KW-0507">mRNA processing</keyword>
<keyword id="KW-0539">Nucleus</keyword>
<keyword id="KW-1185">Reference proteome</keyword>
<keyword id="KW-0677">Repeat</keyword>
<keyword id="KW-0694">RNA-binding</keyword>
<reference key="1">
    <citation type="submission" date="2003-02" db="EMBL/GenBank/DDBJ databases">
        <authorList>
            <consortium name="NIH - Xenopus Gene Collection (XGC) project"/>
        </authorList>
    </citation>
    <scope>NUCLEOTIDE SEQUENCE [LARGE SCALE MRNA]</scope>
    <source>
        <tissue>Embryo</tissue>
    </source>
</reference>
<sequence>MKEPDAIKLFIGQIPRNLDEKDLKPIFEQFGKIYELTVIKDKFTGMHKGCAFLTYCARESALKAQSALHEQKTLPGMNRPIQVKPADSESRGEDRKLFVGMLGKQQTDEDVRRMFETFGNIDECTVLRGPDGTSKGCAFVKFQTHTEAQAAINALHGSRTLPGASSSLVVKFADTEKERGLRRMQQVANQLGMFSPIALQFGAYSAYTQAVSDQLMQQQAALVAAQSAYLNPMATMAAVQMQQMATINPNGIIATPITQINSITSSSGTSTPPTLTATPVSAIPATLGVNGYSAVPTQSTVQPSSEAIYTNGLHPYPAQSPVAQLDPLQQAYAGMQHYTAAYPAAYGLVSPAFTQPPAILTQQPPQQQQQREGPEGCNIFIYHLPQEFTDSEILQMFLPFGNVISAKVFVDRATNQSKCFGFVSFDNPGSAQAAIQSMNGFQIGMKRLKVQLKRPKDANRPY</sequence>
<protein>
    <recommendedName>
        <fullName>CUGBP Elav-like family member 3-B</fullName>
        <shortName>CELF3-B</shortName>
    </recommendedName>
    <alternativeName>
        <fullName>Bruno-like protein 1-B</fullName>
    </alternativeName>
    <alternativeName>
        <fullName>CUG-BP- and ETR-3-like factor 3-B</fullName>
    </alternativeName>
    <alternativeName>
        <fullName>ELAV-type RNA-binding protein 1-B</fullName>
        <shortName>ETR-1-B</shortName>
    </alternativeName>
    <alternativeName>
        <fullName>RNA-binding protein BRUNOL-1-B</fullName>
    </alternativeName>
    <alternativeName>
        <fullName>Trinucleotide repeat-containing gene 4 protein B</fullName>
    </alternativeName>
</protein>
<gene>
    <name type="primary">tnrc4-b</name>
</gene>
<evidence type="ECO:0000250" key="1"/>
<evidence type="ECO:0000255" key="2">
    <source>
        <dbReference type="PROSITE-ProRule" id="PRU00176"/>
    </source>
</evidence>
<evidence type="ECO:0000305" key="3"/>
<comment type="function">
    <text evidence="1">RNA-binding protein that may be involved in the regulation of pre-mRNA alternative splicing.</text>
</comment>
<comment type="subcellular location">
    <subcellularLocation>
        <location evidence="1">Nucleus</location>
    </subcellularLocation>
    <subcellularLocation>
        <location evidence="1">Cytoplasm</location>
    </subcellularLocation>
</comment>
<comment type="similarity">
    <text evidence="3">Belongs to the CELF/BRUNOL family.</text>
</comment>
<proteinExistence type="evidence at transcript level"/>
<name>CEL3B_XENLA</name>
<organism>
    <name type="scientific">Xenopus laevis</name>
    <name type="common">African clawed frog</name>
    <dbReference type="NCBI Taxonomy" id="8355"/>
    <lineage>
        <taxon>Eukaryota</taxon>
        <taxon>Metazoa</taxon>
        <taxon>Chordata</taxon>
        <taxon>Craniata</taxon>
        <taxon>Vertebrata</taxon>
        <taxon>Euteleostomi</taxon>
        <taxon>Amphibia</taxon>
        <taxon>Batrachia</taxon>
        <taxon>Anura</taxon>
        <taxon>Pipoidea</taxon>
        <taxon>Pipidae</taxon>
        <taxon>Xenopodinae</taxon>
        <taxon>Xenopus</taxon>
        <taxon>Xenopus</taxon>
    </lineage>
</organism>